<name>PRIS_PYRIL</name>
<feature type="chain" id="PRO_1000045511" description="DNA primase small subunit PriS">
    <location>
        <begin position="1"/>
        <end position="312"/>
    </location>
</feature>
<feature type="active site" evidence="1">
    <location>
        <position position="88"/>
    </location>
</feature>
<feature type="active site" evidence="1">
    <location>
        <position position="90"/>
    </location>
</feature>
<feature type="active site" evidence="1">
    <location>
        <position position="215"/>
    </location>
</feature>
<keyword id="KW-0235">DNA replication</keyword>
<keyword id="KW-0240">DNA-directed RNA polymerase</keyword>
<keyword id="KW-0460">Magnesium</keyword>
<keyword id="KW-0464">Manganese</keyword>
<keyword id="KW-0479">Metal-binding</keyword>
<keyword id="KW-0548">Nucleotidyltransferase</keyword>
<keyword id="KW-0639">Primosome</keyword>
<keyword id="KW-0804">Transcription</keyword>
<keyword id="KW-0808">Transferase</keyword>
<accession>A1RRN3</accession>
<dbReference type="EC" id="2.7.7.-" evidence="1"/>
<dbReference type="EMBL" id="CP000504">
    <property type="protein sequence ID" value="ABL87615.1"/>
    <property type="molecule type" value="Genomic_DNA"/>
</dbReference>
<dbReference type="RefSeq" id="WP_011762192.1">
    <property type="nucleotide sequence ID" value="NC_008701.1"/>
</dbReference>
<dbReference type="SMR" id="A1RRN3"/>
<dbReference type="STRING" id="384616.Pisl_0437"/>
<dbReference type="GeneID" id="4617745"/>
<dbReference type="KEGG" id="pis:Pisl_0437"/>
<dbReference type="eggNOG" id="arCOG04110">
    <property type="taxonomic scope" value="Archaea"/>
</dbReference>
<dbReference type="HOGENOM" id="CLU_056123_0_0_2"/>
<dbReference type="OrthoDB" id="31125at2157"/>
<dbReference type="Proteomes" id="UP000002595">
    <property type="component" value="Chromosome"/>
</dbReference>
<dbReference type="GO" id="GO:0000428">
    <property type="term" value="C:DNA-directed RNA polymerase complex"/>
    <property type="evidence" value="ECO:0007669"/>
    <property type="project" value="UniProtKB-KW"/>
</dbReference>
<dbReference type="GO" id="GO:1990077">
    <property type="term" value="C:primosome complex"/>
    <property type="evidence" value="ECO:0007669"/>
    <property type="project" value="UniProtKB-KW"/>
</dbReference>
<dbReference type="GO" id="GO:0003899">
    <property type="term" value="F:DNA-directed RNA polymerase activity"/>
    <property type="evidence" value="ECO:0007669"/>
    <property type="project" value="InterPro"/>
</dbReference>
<dbReference type="GO" id="GO:0046872">
    <property type="term" value="F:metal ion binding"/>
    <property type="evidence" value="ECO:0007669"/>
    <property type="project" value="UniProtKB-KW"/>
</dbReference>
<dbReference type="GO" id="GO:0006269">
    <property type="term" value="P:DNA replication, synthesis of primer"/>
    <property type="evidence" value="ECO:0007669"/>
    <property type="project" value="UniProtKB-UniRule"/>
</dbReference>
<dbReference type="CDD" id="cd04860">
    <property type="entry name" value="AE_Prim_S"/>
    <property type="match status" value="1"/>
</dbReference>
<dbReference type="Gene3D" id="3.90.920.10">
    <property type="entry name" value="DNA primase, PRIM domain"/>
    <property type="match status" value="1"/>
</dbReference>
<dbReference type="HAMAP" id="MF_00700">
    <property type="entry name" value="DNA_primase_sml_arc"/>
    <property type="match status" value="1"/>
</dbReference>
<dbReference type="InterPro" id="IPR002755">
    <property type="entry name" value="DNA_primase_S"/>
</dbReference>
<dbReference type="InterPro" id="IPR014052">
    <property type="entry name" value="DNA_primase_ssu_euk/arc"/>
</dbReference>
<dbReference type="InterPro" id="IPR023639">
    <property type="entry name" value="DNA_primase_ssu_PriS"/>
</dbReference>
<dbReference type="NCBIfam" id="TIGR00335">
    <property type="entry name" value="primase_sml"/>
    <property type="match status" value="1"/>
</dbReference>
<dbReference type="PANTHER" id="PTHR10536">
    <property type="entry name" value="DNA PRIMASE SMALL SUBUNIT"/>
    <property type="match status" value="1"/>
</dbReference>
<dbReference type="Pfam" id="PF01896">
    <property type="entry name" value="DNA_primase_S"/>
    <property type="match status" value="1"/>
</dbReference>
<dbReference type="SUPFAM" id="SSF56747">
    <property type="entry name" value="Prim-pol domain"/>
    <property type="match status" value="1"/>
</dbReference>
<proteinExistence type="inferred from homology"/>
<evidence type="ECO:0000255" key="1">
    <source>
        <dbReference type="HAMAP-Rule" id="MF_00700"/>
    </source>
</evidence>
<comment type="function">
    <text evidence="1">Catalytic subunit of DNA primase, an RNA polymerase that catalyzes the synthesis of short RNA molecules used as primers for DNA polymerase during DNA replication. The small subunit contains the primase catalytic core and has DNA synthesis activity on its own. Binding to the large subunit stabilizes and modulates the activity, increasing the rate of DNA synthesis while decreasing the length of the DNA fragments, and conferring RNA synthesis capability. The DNA polymerase activity may enable DNA primase to also catalyze primer extension after primer synthesis. May also play a role in DNA repair.</text>
</comment>
<comment type="cofactor">
    <cofactor evidence="1">
        <name>Mg(2+)</name>
        <dbReference type="ChEBI" id="CHEBI:18420"/>
    </cofactor>
    <cofactor evidence="1">
        <name>Mn(2+)</name>
        <dbReference type="ChEBI" id="CHEBI:29035"/>
    </cofactor>
</comment>
<comment type="subunit">
    <text evidence="1">Heterodimer of a small subunit (PriS) and a large subunit (PriL).</text>
</comment>
<comment type="similarity">
    <text evidence="1">Belongs to the eukaryotic-type primase small subunit family.</text>
</comment>
<reference key="1">
    <citation type="submission" date="2006-12" db="EMBL/GenBank/DDBJ databases">
        <title>Complete sequence of Pyrobaculum islandicum DSM 4184.</title>
        <authorList>
            <person name="Copeland A."/>
            <person name="Lucas S."/>
            <person name="Lapidus A."/>
            <person name="Barry K."/>
            <person name="Detter J.C."/>
            <person name="Glavina del Rio T."/>
            <person name="Dalin E."/>
            <person name="Tice H."/>
            <person name="Pitluck S."/>
            <person name="Meincke L."/>
            <person name="Brettin T."/>
            <person name="Bruce D."/>
            <person name="Han C."/>
            <person name="Tapia R."/>
            <person name="Gilna P."/>
            <person name="Schmutz J."/>
            <person name="Larimer F."/>
            <person name="Land M."/>
            <person name="Hauser L."/>
            <person name="Kyrpides N."/>
            <person name="Mikhailova N."/>
            <person name="Cozen A.E."/>
            <person name="Fitz-Gibbon S.T."/>
            <person name="House C.H."/>
            <person name="Saltikov C."/>
            <person name="Lowe T."/>
            <person name="Richardson P."/>
        </authorList>
    </citation>
    <scope>NUCLEOTIDE SEQUENCE [LARGE SCALE GENOMIC DNA]</scope>
    <source>
        <strain>DSM 4184 / JCM 9189 / GEO3</strain>
    </source>
</reference>
<organism>
    <name type="scientific">Pyrobaculum islandicum (strain DSM 4184 / JCM 9189 / GEO3)</name>
    <dbReference type="NCBI Taxonomy" id="384616"/>
    <lineage>
        <taxon>Archaea</taxon>
        <taxon>Thermoproteota</taxon>
        <taxon>Thermoprotei</taxon>
        <taxon>Thermoproteales</taxon>
        <taxon>Thermoproteaceae</taxon>
        <taxon>Pyrobaculum</taxon>
    </lineage>
</organism>
<gene>
    <name evidence="1" type="primary">priS</name>
    <name type="synonym">priA</name>
    <name type="ordered locus">Pisl_0437</name>
</gene>
<sequence length="312" mass="35981">MIVEVFFRNFYRNYAKFDIDAVEKREFAFQYFEGGIVRHRAFKTLEELKKFVIEKTPRHIYHSSAYYERPGEEDMERKGWLGADLIFDIDGDHLDTEACRESKLVSIACLNDAKEEANKLIDVLTGELGLKPRRVVFSGNRGFHIHVSEEEVLTLGAKERRELVNYLKAVGFDPSRFVVKKGRKKVVLYEEEVGGNLFRIRQGVEDPRALKIEIDEVVTQDIHRLIRVPGSINGKTGLLALPLSQQDLEKDVEQIVERAIVFKKGNLKLRFNKTFEGAVLFEKINAREGDVKVLPAYLAIYLELQEIGKIYD</sequence>
<protein>
    <recommendedName>
        <fullName evidence="1">DNA primase small subunit PriS</fullName>
        <ecNumber evidence="1">2.7.7.-</ecNumber>
    </recommendedName>
</protein>